<dbReference type="GO" id="GO:0005576">
    <property type="term" value="C:extracellular region"/>
    <property type="evidence" value="ECO:0007669"/>
    <property type="project" value="UniProtKB-SubCell"/>
</dbReference>
<dbReference type="GO" id="GO:0042742">
    <property type="term" value="P:defense response to bacterium"/>
    <property type="evidence" value="ECO:0007669"/>
    <property type="project" value="UniProtKB-KW"/>
</dbReference>
<dbReference type="InterPro" id="IPR008453">
    <property type="entry name" value="Clavanin"/>
</dbReference>
<dbReference type="Pfam" id="PF05452">
    <property type="entry name" value="Clavanin"/>
    <property type="match status" value="1"/>
</dbReference>
<comment type="function">
    <text>Has antimicrobial activity.</text>
</comment>
<comment type="subcellular location">
    <subcellularLocation>
        <location>Secreted</location>
    </subcellularLocation>
</comment>
<proteinExistence type="evidence at protein level"/>
<name>CLAVB_STYCL</name>
<keyword id="KW-0027">Amidation</keyword>
<keyword id="KW-0044">Antibiotic</keyword>
<keyword id="KW-0929">Antimicrobial</keyword>
<keyword id="KW-0903">Direct protein sequencing</keyword>
<keyword id="KW-0964">Secreted</keyword>
<protein>
    <recommendedName>
        <fullName>Clavanin-B</fullName>
    </recommendedName>
</protein>
<accession>P80711</accession>
<organism>
    <name type="scientific">Styela clava</name>
    <name type="common">Sea squirt</name>
    <dbReference type="NCBI Taxonomy" id="7725"/>
    <lineage>
        <taxon>Eukaryota</taxon>
        <taxon>Metazoa</taxon>
        <taxon>Chordata</taxon>
        <taxon>Tunicata</taxon>
        <taxon>Ascidiacea</taxon>
        <taxon>Stolidobranchia</taxon>
        <taxon>Styelidae</taxon>
        <taxon>Styela</taxon>
    </lineage>
</organism>
<reference key="1">
    <citation type="journal article" date="1997" name="FEBS Lett.">
        <title>Clavanins, alpha-helical antimicrobial peptides from tunicate hemocytes.</title>
        <authorList>
            <person name="Lee I.H."/>
            <person name="Zhao C."/>
            <person name="Cho Y."/>
            <person name="Harwig S.S.L."/>
            <person name="Cooper E.L."/>
            <person name="Lehrer R.I."/>
        </authorList>
    </citation>
    <scope>PROTEIN SEQUENCE</scope>
    <scope>AMIDATION AT PHE-23</scope>
    <source>
        <tissue>Hemocyte</tissue>
    </source>
</reference>
<feature type="peptide" id="PRO_0000044123" description="Clavanin-B">
    <location>
        <begin position="1"/>
        <end position="23"/>
    </location>
</feature>
<feature type="modified residue" description="Phenylalanine amide" evidence="1">
    <location>
        <position position="23"/>
    </location>
</feature>
<sequence length="23" mass="2695">VFQFLGRIIHHVGNFVHGFSHVF</sequence>
<evidence type="ECO:0000269" key="1">
    <source>
    </source>
</evidence>